<accession>Q5H2V7</accession>
<keyword id="KW-0312">Gluconeogenesis</keyword>
<keyword id="KW-0324">Glycolysis</keyword>
<keyword id="KW-0413">Isomerase</keyword>
<keyword id="KW-1185">Reference proteome</keyword>
<reference key="1">
    <citation type="journal article" date="2005" name="Nucleic Acids Res.">
        <title>The genome sequence of Xanthomonas oryzae pathovar oryzae KACC10331, the bacterial blight pathogen of rice.</title>
        <authorList>
            <person name="Lee B.-M."/>
            <person name="Park Y.-J."/>
            <person name="Park D.-S."/>
            <person name="Kang H.-W."/>
            <person name="Kim J.-G."/>
            <person name="Song E.-S."/>
            <person name="Park I.-C."/>
            <person name="Yoon U.-H."/>
            <person name="Hahn J.-H."/>
            <person name="Koo B.-S."/>
            <person name="Lee G.-B."/>
            <person name="Kim H."/>
            <person name="Park H.-S."/>
            <person name="Yoon K.-O."/>
            <person name="Kim J.-H."/>
            <person name="Jung C.-H."/>
            <person name="Koh N.-H."/>
            <person name="Seo J.-S."/>
            <person name="Go S.-J."/>
        </authorList>
    </citation>
    <scope>NUCLEOTIDE SEQUENCE [LARGE SCALE GENOMIC DNA]</scope>
    <source>
        <strain>KACC10331 / KXO85</strain>
    </source>
</reference>
<comment type="function">
    <text evidence="1">Catalyzes the interconversion of 2-phosphoglycerate and 3-phosphoglycerate.</text>
</comment>
<comment type="catalytic activity">
    <reaction evidence="1">
        <text>(2R)-2-phosphoglycerate = (2R)-3-phosphoglycerate</text>
        <dbReference type="Rhea" id="RHEA:15901"/>
        <dbReference type="ChEBI" id="CHEBI:58272"/>
        <dbReference type="ChEBI" id="CHEBI:58289"/>
        <dbReference type="EC" id="5.4.2.11"/>
    </reaction>
</comment>
<comment type="pathway">
    <text evidence="1">Carbohydrate degradation; glycolysis; pyruvate from D-glyceraldehyde 3-phosphate: step 3/5.</text>
</comment>
<comment type="subunit">
    <text evidence="1">Homodimer.</text>
</comment>
<comment type="similarity">
    <text evidence="1">Belongs to the phosphoglycerate mutase family. BPG-dependent PGAM subfamily.</text>
</comment>
<name>GPMA_XANOR</name>
<sequence length="249" mass="27986">MTRKLVLLRHGQSQWNLDNRFTGWVDVELTDQGRQEAVAAGKLMKDEGLQFDVAHTSVLKRAIHTLQGALKELDQDWLPVSKSWRLNERHYGGLQGLDKAETAAKHGEEQVKIWRRSYDIPPPAMDVDDPGHPCHDRRYATLDRNALPGTESLATTLVRVLPYWHDAIAPQLKAGQTVLVTAHGNSLRALYKYLNDVSNEQILELNIPTGIPLLFELDDNLQVRSFRYLGDPEAAKRAAEAVANQGKAK</sequence>
<organism>
    <name type="scientific">Xanthomonas oryzae pv. oryzae (strain KACC10331 / KXO85)</name>
    <dbReference type="NCBI Taxonomy" id="291331"/>
    <lineage>
        <taxon>Bacteria</taxon>
        <taxon>Pseudomonadati</taxon>
        <taxon>Pseudomonadota</taxon>
        <taxon>Gammaproteobacteria</taxon>
        <taxon>Lysobacterales</taxon>
        <taxon>Lysobacteraceae</taxon>
        <taxon>Xanthomonas</taxon>
    </lineage>
</organism>
<protein>
    <recommendedName>
        <fullName evidence="1">2,3-bisphosphoglycerate-dependent phosphoglycerate mutase</fullName>
        <shortName evidence="1">BPG-dependent PGAM</shortName>
        <shortName evidence="1">PGAM</shortName>
        <shortName evidence="1">Phosphoglyceromutase</shortName>
        <shortName evidence="1">dPGM</shortName>
        <ecNumber evidence="1">5.4.2.11</ecNumber>
    </recommendedName>
</protein>
<feature type="chain" id="PRO_0000229150" description="2,3-bisphosphoglycerate-dependent phosphoglycerate mutase">
    <location>
        <begin position="1"/>
        <end position="249"/>
    </location>
</feature>
<feature type="active site" description="Tele-phosphohistidine intermediate" evidence="1">
    <location>
        <position position="10"/>
    </location>
</feature>
<feature type="active site" description="Proton donor/acceptor" evidence="1">
    <location>
        <position position="88"/>
    </location>
</feature>
<feature type="binding site" evidence="1">
    <location>
        <begin position="9"/>
        <end position="16"/>
    </location>
    <ligand>
        <name>substrate</name>
    </ligand>
</feature>
<feature type="binding site" evidence="1">
    <location>
        <begin position="22"/>
        <end position="23"/>
    </location>
    <ligand>
        <name>substrate</name>
    </ligand>
</feature>
<feature type="binding site" evidence="1">
    <location>
        <position position="61"/>
    </location>
    <ligand>
        <name>substrate</name>
    </ligand>
</feature>
<feature type="binding site" evidence="1">
    <location>
        <begin position="88"/>
        <end position="91"/>
    </location>
    <ligand>
        <name>substrate</name>
    </ligand>
</feature>
<feature type="binding site" evidence="1">
    <location>
        <position position="99"/>
    </location>
    <ligand>
        <name>substrate</name>
    </ligand>
</feature>
<feature type="binding site" evidence="1">
    <location>
        <begin position="115"/>
        <end position="116"/>
    </location>
    <ligand>
        <name>substrate</name>
    </ligand>
</feature>
<feature type="binding site" evidence="1">
    <location>
        <begin position="184"/>
        <end position="185"/>
    </location>
    <ligand>
        <name>substrate</name>
    </ligand>
</feature>
<feature type="site" description="Transition state stabilizer" evidence="1">
    <location>
        <position position="183"/>
    </location>
</feature>
<dbReference type="EC" id="5.4.2.11" evidence="1"/>
<dbReference type="EMBL" id="AE013598">
    <property type="protein sequence ID" value="AAW74714.1"/>
    <property type="molecule type" value="Genomic_DNA"/>
</dbReference>
<dbReference type="SMR" id="Q5H2V7"/>
<dbReference type="STRING" id="291331.XOO1460"/>
<dbReference type="KEGG" id="xoo:XOO1460"/>
<dbReference type="HOGENOM" id="CLU_033323_1_1_6"/>
<dbReference type="UniPathway" id="UPA00109">
    <property type="reaction ID" value="UER00186"/>
</dbReference>
<dbReference type="Proteomes" id="UP000006735">
    <property type="component" value="Chromosome"/>
</dbReference>
<dbReference type="GO" id="GO:0004619">
    <property type="term" value="F:phosphoglycerate mutase activity"/>
    <property type="evidence" value="ECO:0007669"/>
    <property type="project" value="UniProtKB-EC"/>
</dbReference>
<dbReference type="GO" id="GO:0006094">
    <property type="term" value="P:gluconeogenesis"/>
    <property type="evidence" value="ECO:0007669"/>
    <property type="project" value="UniProtKB-UniRule"/>
</dbReference>
<dbReference type="GO" id="GO:0006096">
    <property type="term" value="P:glycolytic process"/>
    <property type="evidence" value="ECO:0007669"/>
    <property type="project" value="UniProtKB-UniRule"/>
</dbReference>
<dbReference type="CDD" id="cd07067">
    <property type="entry name" value="HP_PGM_like"/>
    <property type="match status" value="1"/>
</dbReference>
<dbReference type="FunFam" id="3.40.50.1240:FF:000003">
    <property type="entry name" value="2,3-bisphosphoglycerate-dependent phosphoglycerate mutase"/>
    <property type="match status" value="1"/>
</dbReference>
<dbReference type="Gene3D" id="3.40.50.1240">
    <property type="entry name" value="Phosphoglycerate mutase-like"/>
    <property type="match status" value="1"/>
</dbReference>
<dbReference type="HAMAP" id="MF_01039">
    <property type="entry name" value="PGAM_GpmA"/>
    <property type="match status" value="1"/>
</dbReference>
<dbReference type="InterPro" id="IPR013078">
    <property type="entry name" value="His_Pase_superF_clade-1"/>
</dbReference>
<dbReference type="InterPro" id="IPR029033">
    <property type="entry name" value="His_PPase_superfam"/>
</dbReference>
<dbReference type="InterPro" id="IPR001345">
    <property type="entry name" value="PG/BPGM_mutase_AS"/>
</dbReference>
<dbReference type="InterPro" id="IPR005952">
    <property type="entry name" value="Phosphogly_mut1"/>
</dbReference>
<dbReference type="NCBIfam" id="TIGR01258">
    <property type="entry name" value="pgm_1"/>
    <property type="match status" value="1"/>
</dbReference>
<dbReference type="NCBIfam" id="NF010713">
    <property type="entry name" value="PRK14115.1"/>
    <property type="match status" value="1"/>
</dbReference>
<dbReference type="PANTHER" id="PTHR11931">
    <property type="entry name" value="PHOSPHOGLYCERATE MUTASE"/>
    <property type="match status" value="1"/>
</dbReference>
<dbReference type="Pfam" id="PF00300">
    <property type="entry name" value="His_Phos_1"/>
    <property type="match status" value="2"/>
</dbReference>
<dbReference type="PIRSF" id="PIRSF000709">
    <property type="entry name" value="6PFK_2-Ptase"/>
    <property type="match status" value="1"/>
</dbReference>
<dbReference type="SMART" id="SM00855">
    <property type="entry name" value="PGAM"/>
    <property type="match status" value="1"/>
</dbReference>
<dbReference type="SUPFAM" id="SSF53254">
    <property type="entry name" value="Phosphoglycerate mutase-like"/>
    <property type="match status" value="1"/>
</dbReference>
<dbReference type="PROSITE" id="PS00175">
    <property type="entry name" value="PG_MUTASE"/>
    <property type="match status" value="1"/>
</dbReference>
<proteinExistence type="inferred from homology"/>
<evidence type="ECO:0000255" key="1">
    <source>
        <dbReference type="HAMAP-Rule" id="MF_01039"/>
    </source>
</evidence>
<gene>
    <name evidence="1" type="primary">gpmA</name>
    <name type="ordered locus">XOO1460</name>
</gene>